<dbReference type="EMBL" id="FM180568">
    <property type="protein sequence ID" value="CAS11603.1"/>
    <property type="molecule type" value="Genomic_DNA"/>
</dbReference>
<dbReference type="RefSeq" id="WP_000956607.1">
    <property type="nucleotide sequence ID" value="NC_011601.1"/>
</dbReference>
<dbReference type="SMR" id="B7UML0"/>
<dbReference type="KEGG" id="ecg:E2348C_4055"/>
<dbReference type="HOGENOM" id="CLU_022130_0_0_6"/>
<dbReference type="Proteomes" id="UP000008205">
    <property type="component" value="Chromosome"/>
</dbReference>
<dbReference type="GO" id="GO:0005829">
    <property type="term" value="C:cytosol"/>
    <property type="evidence" value="ECO:0007669"/>
    <property type="project" value="TreeGrafter"/>
</dbReference>
<dbReference type="CDD" id="cd01462">
    <property type="entry name" value="VWA_YIEM_type"/>
    <property type="match status" value="1"/>
</dbReference>
<dbReference type="Gene3D" id="3.40.50.410">
    <property type="entry name" value="von Willebrand factor, type A domain"/>
    <property type="match status" value="1"/>
</dbReference>
<dbReference type="HAMAP" id="MF_01626">
    <property type="entry name" value="ViaA"/>
    <property type="match status" value="1"/>
</dbReference>
<dbReference type="InterPro" id="IPR008912">
    <property type="entry name" value="Uncharacterised_CoxE"/>
</dbReference>
<dbReference type="InterPro" id="IPR023481">
    <property type="entry name" value="Uncharacterised_ViaA"/>
</dbReference>
<dbReference type="InterPro" id="IPR002035">
    <property type="entry name" value="VWF_A"/>
</dbReference>
<dbReference type="InterPro" id="IPR036465">
    <property type="entry name" value="vWFA_dom_sf"/>
</dbReference>
<dbReference type="NCBIfam" id="NF008230">
    <property type="entry name" value="PRK10997.1"/>
    <property type="match status" value="1"/>
</dbReference>
<dbReference type="PANTHER" id="PTHR36846">
    <property type="entry name" value="PROTEIN VIAA"/>
    <property type="match status" value="1"/>
</dbReference>
<dbReference type="PANTHER" id="PTHR36846:SF1">
    <property type="entry name" value="PROTEIN VIAA"/>
    <property type="match status" value="1"/>
</dbReference>
<dbReference type="Pfam" id="PF05762">
    <property type="entry name" value="VWA_CoxE"/>
    <property type="match status" value="1"/>
</dbReference>
<dbReference type="SMART" id="SM00327">
    <property type="entry name" value="VWA"/>
    <property type="match status" value="1"/>
</dbReference>
<dbReference type="SUPFAM" id="SSF53300">
    <property type="entry name" value="vWA-like"/>
    <property type="match status" value="1"/>
</dbReference>
<protein>
    <recommendedName>
        <fullName evidence="1">Regulatory protein ViaA</fullName>
    </recommendedName>
    <alternativeName>
        <fullName evidence="1">VWA interacting with AAA+ ATPase</fullName>
    </alternativeName>
</protein>
<comment type="function">
    <text evidence="1">Component of the RavA-ViaA chaperone complex, which may act on the membrane to optimize the function of some of the respiratory chains. ViaA stimulates the ATPase activity of RavA.</text>
</comment>
<comment type="subunit">
    <text evidence="1">Homodimer. Interacts with RavA.</text>
</comment>
<comment type="subcellular location">
    <subcellularLocation>
        <location evidence="1">Cytoplasm</location>
    </subcellularLocation>
</comment>
<comment type="similarity">
    <text evidence="1">Belongs to the ViaA family.</text>
</comment>
<name>VIAA_ECO27</name>
<feature type="chain" id="PRO_1000186140" description="Regulatory protein ViaA">
    <location>
        <begin position="1"/>
        <end position="483"/>
    </location>
</feature>
<sequence>MLTLDTLNVMLAVSEEGLIEEMIIALLASPQLAVFFEKFPRLKAAITDDVPRWREALRRRLKDARVPPELTEEVMCYQQSQLLSTPQFIVQLPQILDLLHRLNSPWAEQACQLVDANSTITSALHTLFLQRWRLSLIVQATTLNQQLLEEEREQLLSEVQERMTLSGQLEPILADNNTAAGRLWDMSAGQLKRGDYQLIVKYGEFLNEQPELKRLAEQLGRSREAKSIPRNDAQMETFRTMVREPATVPEQVDGLQQSDDILRLLPPELATLGITELEYEFYRRLVEKQLLTYRLHGESWREKVIERPVVHKDYDEQPRGPFIVCVDTSGSMGGFNEQCAKAFCLALMRIALAENRRCYIMLFSTEIVRYELSGPQGIEQAIRFLSQQFRGGTDLASCFRAIMERLQSREWFDADAVVISDFIAQRLPDDVTSKVKELQRVHQHRFHAVAMSAHGKPGIMRIFDHIWRFDTGMRSRLLRRWRR</sequence>
<evidence type="ECO:0000255" key="1">
    <source>
        <dbReference type="HAMAP-Rule" id="MF_01626"/>
    </source>
</evidence>
<accession>B7UML0</accession>
<reference key="1">
    <citation type="journal article" date="2009" name="J. Bacteriol.">
        <title>Complete genome sequence and comparative genome analysis of enteropathogenic Escherichia coli O127:H6 strain E2348/69.</title>
        <authorList>
            <person name="Iguchi A."/>
            <person name="Thomson N.R."/>
            <person name="Ogura Y."/>
            <person name="Saunders D."/>
            <person name="Ooka T."/>
            <person name="Henderson I.R."/>
            <person name="Harris D."/>
            <person name="Asadulghani M."/>
            <person name="Kurokawa K."/>
            <person name="Dean P."/>
            <person name="Kenny B."/>
            <person name="Quail M.A."/>
            <person name="Thurston S."/>
            <person name="Dougan G."/>
            <person name="Hayashi T."/>
            <person name="Parkhill J."/>
            <person name="Frankel G."/>
        </authorList>
    </citation>
    <scope>NUCLEOTIDE SEQUENCE [LARGE SCALE GENOMIC DNA]</scope>
    <source>
        <strain>E2348/69 / EPEC</strain>
    </source>
</reference>
<proteinExistence type="inferred from homology"/>
<gene>
    <name evidence="1" type="primary">viaA</name>
    <name type="ordered locus">E2348C_4055</name>
</gene>
<organism>
    <name type="scientific">Escherichia coli O127:H6 (strain E2348/69 / EPEC)</name>
    <dbReference type="NCBI Taxonomy" id="574521"/>
    <lineage>
        <taxon>Bacteria</taxon>
        <taxon>Pseudomonadati</taxon>
        <taxon>Pseudomonadota</taxon>
        <taxon>Gammaproteobacteria</taxon>
        <taxon>Enterobacterales</taxon>
        <taxon>Enterobacteriaceae</taxon>
        <taxon>Escherichia</taxon>
    </lineage>
</organism>
<keyword id="KW-0143">Chaperone</keyword>
<keyword id="KW-0963">Cytoplasm</keyword>
<keyword id="KW-1185">Reference proteome</keyword>